<organism>
    <name type="scientific">Homo sapiens</name>
    <name type="common">Human</name>
    <dbReference type="NCBI Taxonomy" id="9606"/>
    <lineage>
        <taxon>Eukaryota</taxon>
        <taxon>Metazoa</taxon>
        <taxon>Chordata</taxon>
        <taxon>Craniata</taxon>
        <taxon>Vertebrata</taxon>
        <taxon>Euteleostomi</taxon>
        <taxon>Mammalia</taxon>
        <taxon>Eutheria</taxon>
        <taxon>Euarchontoglires</taxon>
        <taxon>Primates</taxon>
        <taxon>Haplorrhini</taxon>
        <taxon>Catarrhini</taxon>
        <taxon>Hominidae</taxon>
        <taxon>Homo</taxon>
    </lineage>
</organism>
<sequence length="811" mass="92960">MESQGVPPGPYRATKLWNEVTTSFRAGMPLRKHRQHFKKYGNCFTAGEAVDWLYDLLRNNSNFGPEVTRQQTIQLLRKFLKNHVIEDIKGRWGSENVDDNNQLFRFPATSPLKTLPRRYPELRKNNIENFSKDKDSIFKLRNLSRRTPKRHGLHLSQENGEKIKHEIINEDQENAIDNRELSQEDVEEVWRYVILIYLQTILGVPSLEEVINPKQVIPQYIMYNMANTSKRGVVILQNKSDDLPHWVLSAMKCLANWPRSNDMNNPTYVGFERDVFRTIADYFLDLPEPLLTFEYYELFVNILVVCGYITVSDRSSGIHKIQDDPQSSKFLHLNNLNSFKSTECLLLSLLHREKNKEESDSTERLQISNPGFQERCAKKMQLVNLRNRRVSANDIMGGSCHNLIGLSNMHDLSSNSKPRCCSLEGIVDVPGNSSKEASSVFHQSFPNIEGQNNKLFLESKPKQEFLLNLHSEENIQKPFSAGFKRTSTLTVQDQEELCNGKCKSKQLCRSQSLLLRSSTRRNSYINTPVAEIIMKPNVGQGSTSVQTAMESELGESSATINKRLCKSTIELSENSLLPASSMLTGTQSLLQPHLERVAIDALQLCCLLLPPPNRRKLQLLMRMISRMSQNVDMPKLHDAMGTRSLMIHTFSRCVLCCAEEVDLDELLAGRLVSFLMDHHQEILQVPSYLQTAVEKHLDYLKKGHIENPGDGLFAPLPTYSYCKQISAQEFDEQKVSTSQAAIAELLENIIKNRSLPLKEKRKKLKQFQKEYPLIYQKRFPTTESEAALFGDKPTIKQPMLILRKPKFRSLR</sequence>
<accession>Q5TB30</accession>
<accession>A8QXE0</accession>
<accession>A8QXE1</accession>
<accession>Q05DU3</accession>
<accession>Q5TB28</accession>
<accession>Q9H9I3</accession>
<accession>Q9NX21</accession>
<accession>Q9NXZ0</accession>
<dbReference type="EMBL" id="AJ278112">
    <property type="protein sequence ID" value="CAB92444.1"/>
    <property type="molecule type" value="mRNA"/>
</dbReference>
<dbReference type="EMBL" id="AB281187">
    <property type="protein sequence ID" value="BAF91373.1"/>
    <property type="molecule type" value="mRNA"/>
</dbReference>
<dbReference type="EMBL" id="AB281274">
    <property type="protein sequence ID" value="BAF91374.1"/>
    <property type="molecule type" value="mRNA"/>
</dbReference>
<dbReference type="EMBL" id="AL138789">
    <property type="status" value="NOT_ANNOTATED_CDS"/>
    <property type="molecule type" value="Genomic_DNA"/>
</dbReference>
<dbReference type="EMBL" id="CH471059">
    <property type="protein sequence ID" value="EAX06475.1"/>
    <property type="molecule type" value="Genomic_DNA"/>
</dbReference>
<dbReference type="EMBL" id="CH471059">
    <property type="protein sequence ID" value="EAX06476.1"/>
    <property type="molecule type" value="Genomic_DNA"/>
</dbReference>
<dbReference type="EMBL" id="BC003511">
    <property type="protein sequence ID" value="AAH03511.1"/>
    <property type="status" value="ALT_SEQ"/>
    <property type="molecule type" value="mRNA"/>
</dbReference>
<dbReference type="EMBL" id="BC065304">
    <property type="protein sequence ID" value="AAH65304.1"/>
    <property type="molecule type" value="mRNA"/>
</dbReference>
<dbReference type="EMBL" id="AK000490">
    <property type="protein sequence ID" value="BAA91201.1"/>
    <property type="status" value="ALT_INIT"/>
    <property type="molecule type" value="mRNA"/>
</dbReference>
<dbReference type="EMBL" id="AK022792">
    <property type="protein sequence ID" value="BAB14246.1"/>
    <property type="status" value="ALT_SEQ"/>
    <property type="molecule type" value="mRNA"/>
</dbReference>
<dbReference type="CCDS" id="CCDS44159.1">
    <molecule id="Q5TB30-5"/>
</dbReference>
<dbReference type="CCDS" id="CCDS644.1">
    <molecule id="Q5TB30-2"/>
</dbReference>
<dbReference type="RefSeq" id="NP_001107592.1">
    <molecule id="Q5TB30-5"/>
    <property type="nucleotide sequence ID" value="NM_001114120.3"/>
</dbReference>
<dbReference type="RefSeq" id="NP_060249.2">
    <molecule id="Q5TB30-2"/>
    <property type="nucleotide sequence ID" value="NM_017779.5"/>
</dbReference>
<dbReference type="PDB" id="2YSR">
    <property type="method" value="NMR"/>
    <property type="chains" value="A=11-108"/>
</dbReference>
<dbReference type="PDBsum" id="2YSR"/>
<dbReference type="SMR" id="Q5TB30"/>
<dbReference type="BioGRID" id="120774">
    <property type="interactions" value="119"/>
</dbReference>
<dbReference type="FunCoup" id="Q5TB30">
    <property type="interactions" value="882"/>
</dbReference>
<dbReference type="IntAct" id="Q5TB30">
    <property type="interactions" value="35"/>
</dbReference>
<dbReference type="MINT" id="Q5TB30"/>
<dbReference type="STRING" id="9606.ENSP00000412292"/>
<dbReference type="GlyGen" id="Q5TB30">
    <property type="glycosylation" value="4 sites, 1 O-linked glycan (4 sites)"/>
</dbReference>
<dbReference type="iPTMnet" id="Q5TB30"/>
<dbReference type="PhosphoSitePlus" id="Q5TB30"/>
<dbReference type="BioMuta" id="DEPDC1"/>
<dbReference type="DMDM" id="300669641"/>
<dbReference type="jPOST" id="Q5TB30"/>
<dbReference type="MassIVE" id="Q5TB30"/>
<dbReference type="PaxDb" id="9606-ENSP00000412292"/>
<dbReference type="PeptideAtlas" id="Q5TB30"/>
<dbReference type="ProteomicsDB" id="64887">
    <molecule id="Q5TB30-5"/>
</dbReference>
<dbReference type="ProteomicsDB" id="64888">
    <molecule id="Q5TB30-2"/>
</dbReference>
<dbReference type="Pumba" id="Q5TB30"/>
<dbReference type="Antibodypedia" id="33419">
    <property type="antibodies" value="140 antibodies from 20 providers"/>
</dbReference>
<dbReference type="DNASU" id="55635"/>
<dbReference type="Ensembl" id="ENST00000370966.9">
    <molecule id="Q5TB30-2"/>
    <property type="protein sequence ID" value="ENSP00000360005.5"/>
    <property type="gene ID" value="ENSG00000024526.17"/>
</dbReference>
<dbReference type="Ensembl" id="ENST00000456315.7">
    <molecule id="Q5TB30-5"/>
    <property type="protein sequence ID" value="ENSP00000412292.2"/>
    <property type="gene ID" value="ENSG00000024526.17"/>
</dbReference>
<dbReference type="GeneID" id="55635"/>
<dbReference type="KEGG" id="hsa:55635"/>
<dbReference type="MANE-Select" id="ENST00000456315.7">
    <property type="protein sequence ID" value="ENSP00000412292.2"/>
    <property type="RefSeq nucleotide sequence ID" value="NM_001114120.3"/>
    <property type="RefSeq protein sequence ID" value="NP_001107592.1"/>
</dbReference>
<dbReference type="UCSC" id="uc001del.5">
    <molecule id="Q5TB30-5"/>
    <property type="organism name" value="human"/>
</dbReference>
<dbReference type="AGR" id="HGNC:22949"/>
<dbReference type="CTD" id="55635"/>
<dbReference type="DisGeNET" id="55635"/>
<dbReference type="GeneCards" id="DEPDC1"/>
<dbReference type="HGNC" id="HGNC:22949">
    <property type="gene designation" value="DEPDC1"/>
</dbReference>
<dbReference type="HPA" id="ENSG00000024526">
    <property type="expression patterns" value="Tissue enhanced (bone marrow, lymphoid tissue, testis)"/>
</dbReference>
<dbReference type="MIM" id="612002">
    <property type="type" value="gene"/>
</dbReference>
<dbReference type="neXtProt" id="NX_Q5TB30"/>
<dbReference type="OpenTargets" id="ENSG00000024526"/>
<dbReference type="PharmGKB" id="PA134974825"/>
<dbReference type="VEuPathDB" id="HostDB:ENSG00000024526"/>
<dbReference type="eggNOG" id="ENOG502QR00">
    <property type="taxonomic scope" value="Eukaryota"/>
</dbReference>
<dbReference type="GeneTree" id="ENSGT00950000182976"/>
<dbReference type="HOGENOM" id="CLU_019607_0_0_1"/>
<dbReference type="InParanoid" id="Q5TB30"/>
<dbReference type="OMA" id="HRRHMRT"/>
<dbReference type="OrthoDB" id="524326at2759"/>
<dbReference type="PAN-GO" id="Q5TB30">
    <property type="GO annotations" value="2 GO annotations based on evolutionary models"/>
</dbReference>
<dbReference type="PhylomeDB" id="Q5TB30"/>
<dbReference type="TreeFam" id="TF328365"/>
<dbReference type="PathwayCommons" id="Q5TB30"/>
<dbReference type="SignaLink" id="Q5TB30"/>
<dbReference type="BioGRID-ORCS" id="55635">
    <property type="hits" value="40 hits in 1155 CRISPR screens"/>
</dbReference>
<dbReference type="EvolutionaryTrace" id="Q5TB30"/>
<dbReference type="GenomeRNAi" id="55635"/>
<dbReference type="Pharos" id="Q5TB30">
    <property type="development level" value="Tbio"/>
</dbReference>
<dbReference type="PRO" id="PR:Q5TB30"/>
<dbReference type="Proteomes" id="UP000005640">
    <property type="component" value="Chromosome 1"/>
</dbReference>
<dbReference type="RNAct" id="Q5TB30">
    <property type="molecule type" value="protein"/>
</dbReference>
<dbReference type="Bgee" id="ENSG00000024526">
    <property type="expression patterns" value="Expressed in ventricular zone and 119 other cell types or tissues"/>
</dbReference>
<dbReference type="ExpressionAtlas" id="Q5TB30">
    <property type="expression patterns" value="baseline and differential"/>
</dbReference>
<dbReference type="GO" id="GO:0005634">
    <property type="term" value="C:nucleus"/>
    <property type="evidence" value="ECO:0000314"/>
    <property type="project" value="UniProtKB"/>
</dbReference>
<dbReference type="GO" id="GO:0017053">
    <property type="term" value="C:transcription repressor complex"/>
    <property type="evidence" value="ECO:0000314"/>
    <property type="project" value="UniProtKB"/>
</dbReference>
<dbReference type="GO" id="GO:0005096">
    <property type="term" value="F:GTPase activator activity"/>
    <property type="evidence" value="ECO:0007669"/>
    <property type="project" value="UniProtKB-KW"/>
</dbReference>
<dbReference type="GO" id="GO:0035556">
    <property type="term" value="P:intracellular signal transduction"/>
    <property type="evidence" value="ECO:0007669"/>
    <property type="project" value="InterPro"/>
</dbReference>
<dbReference type="GO" id="GO:0045892">
    <property type="term" value="P:negative regulation of DNA-templated transcription"/>
    <property type="evidence" value="ECO:0000314"/>
    <property type="project" value="UniProtKB"/>
</dbReference>
<dbReference type="CDD" id="cd04405">
    <property type="entry name" value="RhoGAP_BRCC3-like"/>
    <property type="match status" value="1"/>
</dbReference>
<dbReference type="FunFam" id="1.10.555.10:FF:000038">
    <property type="entry name" value="DEP domain-containing protein 1A isoform X1"/>
    <property type="match status" value="1"/>
</dbReference>
<dbReference type="FunFam" id="1.10.10.10:FF:000182">
    <property type="entry name" value="DEP domain-containing protein 1B isoform 1"/>
    <property type="match status" value="1"/>
</dbReference>
<dbReference type="Gene3D" id="1.10.555.10">
    <property type="entry name" value="Rho GTPase activation protein"/>
    <property type="match status" value="1"/>
</dbReference>
<dbReference type="Gene3D" id="1.10.10.10">
    <property type="entry name" value="Winged helix-like DNA-binding domain superfamily/Winged helix DNA-binding domain"/>
    <property type="match status" value="1"/>
</dbReference>
<dbReference type="InterPro" id="IPR000591">
    <property type="entry name" value="DEP_dom"/>
</dbReference>
<dbReference type="InterPro" id="IPR008936">
    <property type="entry name" value="Rho_GTPase_activation_prot"/>
</dbReference>
<dbReference type="InterPro" id="IPR036388">
    <property type="entry name" value="WH-like_DNA-bd_sf"/>
</dbReference>
<dbReference type="InterPro" id="IPR036390">
    <property type="entry name" value="WH_DNA-bd_sf"/>
</dbReference>
<dbReference type="PANTHER" id="PTHR16206">
    <property type="entry name" value="DEP DOMAIN-CONTAINING"/>
    <property type="match status" value="1"/>
</dbReference>
<dbReference type="PANTHER" id="PTHR16206:SF12">
    <property type="entry name" value="DEP DOMAIN-CONTAINING PROTEIN 1A"/>
    <property type="match status" value="1"/>
</dbReference>
<dbReference type="Pfam" id="PF00610">
    <property type="entry name" value="DEP"/>
    <property type="match status" value="1"/>
</dbReference>
<dbReference type="SMART" id="SM00049">
    <property type="entry name" value="DEP"/>
    <property type="match status" value="1"/>
</dbReference>
<dbReference type="SUPFAM" id="SSF48350">
    <property type="entry name" value="GTPase activation domain, GAP"/>
    <property type="match status" value="1"/>
</dbReference>
<dbReference type="SUPFAM" id="SSF46785">
    <property type="entry name" value="Winged helix' DNA-binding domain"/>
    <property type="match status" value="1"/>
</dbReference>
<dbReference type="PROSITE" id="PS50186">
    <property type="entry name" value="DEP"/>
    <property type="match status" value="1"/>
</dbReference>
<name>DEP1A_HUMAN</name>
<reference key="1">
    <citation type="thesis" date="2000" institute="Universite Catholique de Louvain / Bruxelles" country="Belgium">
        <authorList>
            <person name="Martelange V."/>
        </authorList>
    </citation>
    <scope>NUCLEOTIDE SEQUENCE [MRNA] (ISOFORM 2)</scope>
    <source>
        <tissue>Rhabdomyosarcoma</tissue>
    </source>
</reference>
<reference key="2">
    <citation type="journal article" date="2007" name="Oncogene">
        <title>Involvement of upregulation of DEPDC1 (DEP domain containing 1) in bladder carcinogenesis.</title>
        <authorList>
            <person name="Kanehira M."/>
            <person name="Harada Y."/>
            <person name="Takata R."/>
            <person name="Shuin T."/>
            <person name="Miki T."/>
            <person name="Fujioka T."/>
            <person name="Nakamura Y."/>
            <person name="Katagiri T."/>
        </authorList>
    </citation>
    <scope>NUCLEOTIDE SEQUENCE [MRNA] (ISOFORMS 1 AND 2)</scope>
    <scope>SUBUNIT</scope>
    <scope>SUBCELLULAR LOCATION</scope>
    <scope>TISSUE SPECIFICITY</scope>
    <source>
        <tissue>Urinary bladder carcinoma</tissue>
    </source>
</reference>
<reference key="3">
    <citation type="journal article" date="2006" name="Nature">
        <title>The DNA sequence and biological annotation of human chromosome 1.</title>
        <authorList>
            <person name="Gregory S.G."/>
            <person name="Barlow K.F."/>
            <person name="McLay K.E."/>
            <person name="Kaul R."/>
            <person name="Swarbreck D."/>
            <person name="Dunham A."/>
            <person name="Scott C.E."/>
            <person name="Howe K.L."/>
            <person name="Woodfine K."/>
            <person name="Spencer C.C.A."/>
            <person name="Jones M.C."/>
            <person name="Gillson C."/>
            <person name="Searle S."/>
            <person name="Zhou Y."/>
            <person name="Kokocinski F."/>
            <person name="McDonald L."/>
            <person name="Evans R."/>
            <person name="Phillips K."/>
            <person name="Atkinson A."/>
            <person name="Cooper R."/>
            <person name="Jones C."/>
            <person name="Hall R.E."/>
            <person name="Andrews T.D."/>
            <person name="Lloyd C."/>
            <person name="Ainscough R."/>
            <person name="Almeida J.P."/>
            <person name="Ambrose K.D."/>
            <person name="Anderson F."/>
            <person name="Andrew R.W."/>
            <person name="Ashwell R.I.S."/>
            <person name="Aubin K."/>
            <person name="Babbage A.K."/>
            <person name="Bagguley C.L."/>
            <person name="Bailey J."/>
            <person name="Beasley H."/>
            <person name="Bethel G."/>
            <person name="Bird C.P."/>
            <person name="Bray-Allen S."/>
            <person name="Brown J.Y."/>
            <person name="Brown A.J."/>
            <person name="Buckley D."/>
            <person name="Burton J."/>
            <person name="Bye J."/>
            <person name="Carder C."/>
            <person name="Chapman J.C."/>
            <person name="Clark S.Y."/>
            <person name="Clarke G."/>
            <person name="Clee C."/>
            <person name="Cobley V."/>
            <person name="Collier R.E."/>
            <person name="Corby N."/>
            <person name="Coville G.J."/>
            <person name="Davies J."/>
            <person name="Deadman R."/>
            <person name="Dunn M."/>
            <person name="Earthrowl M."/>
            <person name="Ellington A.G."/>
            <person name="Errington H."/>
            <person name="Frankish A."/>
            <person name="Frankland J."/>
            <person name="French L."/>
            <person name="Garner P."/>
            <person name="Garnett J."/>
            <person name="Gay L."/>
            <person name="Ghori M.R.J."/>
            <person name="Gibson R."/>
            <person name="Gilby L.M."/>
            <person name="Gillett W."/>
            <person name="Glithero R.J."/>
            <person name="Grafham D.V."/>
            <person name="Griffiths C."/>
            <person name="Griffiths-Jones S."/>
            <person name="Grocock R."/>
            <person name="Hammond S."/>
            <person name="Harrison E.S.I."/>
            <person name="Hart E."/>
            <person name="Haugen E."/>
            <person name="Heath P.D."/>
            <person name="Holmes S."/>
            <person name="Holt K."/>
            <person name="Howden P.J."/>
            <person name="Hunt A.R."/>
            <person name="Hunt S.E."/>
            <person name="Hunter G."/>
            <person name="Isherwood J."/>
            <person name="James R."/>
            <person name="Johnson C."/>
            <person name="Johnson D."/>
            <person name="Joy A."/>
            <person name="Kay M."/>
            <person name="Kershaw J.K."/>
            <person name="Kibukawa M."/>
            <person name="Kimberley A.M."/>
            <person name="King A."/>
            <person name="Knights A.J."/>
            <person name="Lad H."/>
            <person name="Laird G."/>
            <person name="Lawlor S."/>
            <person name="Leongamornlert D.A."/>
            <person name="Lloyd D.M."/>
            <person name="Loveland J."/>
            <person name="Lovell J."/>
            <person name="Lush M.J."/>
            <person name="Lyne R."/>
            <person name="Martin S."/>
            <person name="Mashreghi-Mohammadi M."/>
            <person name="Matthews L."/>
            <person name="Matthews N.S.W."/>
            <person name="McLaren S."/>
            <person name="Milne S."/>
            <person name="Mistry S."/>
            <person name="Moore M.J.F."/>
            <person name="Nickerson T."/>
            <person name="O'Dell C.N."/>
            <person name="Oliver K."/>
            <person name="Palmeiri A."/>
            <person name="Palmer S.A."/>
            <person name="Parker A."/>
            <person name="Patel D."/>
            <person name="Pearce A.V."/>
            <person name="Peck A.I."/>
            <person name="Pelan S."/>
            <person name="Phelps K."/>
            <person name="Phillimore B.J."/>
            <person name="Plumb R."/>
            <person name="Rajan J."/>
            <person name="Raymond C."/>
            <person name="Rouse G."/>
            <person name="Saenphimmachak C."/>
            <person name="Sehra H.K."/>
            <person name="Sheridan E."/>
            <person name="Shownkeen R."/>
            <person name="Sims S."/>
            <person name="Skuce C.D."/>
            <person name="Smith M."/>
            <person name="Steward C."/>
            <person name="Subramanian S."/>
            <person name="Sycamore N."/>
            <person name="Tracey A."/>
            <person name="Tromans A."/>
            <person name="Van Helmond Z."/>
            <person name="Wall M."/>
            <person name="Wallis J.M."/>
            <person name="White S."/>
            <person name="Whitehead S.L."/>
            <person name="Wilkinson J.E."/>
            <person name="Willey D.L."/>
            <person name="Williams H."/>
            <person name="Wilming L."/>
            <person name="Wray P.W."/>
            <person name="Wu Z."/>
            <person name="Coulson A."/>
            <person name="Vaudin M."/>
            <person name="Sulston J.E."/>
            <person name="Durbin R.M."/>
            <person name="Hubbard T."/>
            <person name="Wooster R."/>
            <person name="Dunham I."/>
            <person name="Carter N.P."/>
            <person name="McVean G."/>
            <person name="Ross M.T."/>
            <person name="Harrow J."/>
            <person name="Olson M.V."/>
            <person name="Beck S."/>
            <person name="Rogers J."/>
            <person name="Bentley D.R."/>
        </authorList>
    </citation>
    <scope>NUCLEOTIDE SEQUENCE [LARGE SCALE GENOMIC DNA]</scope>
</reference>
<reference key="4">
    <citation type="submission" date="2005-09" db="EMBL/GenBank/DDBJ databases">
        <authorList>
            <person name="Mural R.J."/>
            <person name="Istrail S."/>
            <person name="Sutton G.G."/>
            <person name="Florea L."/>
            <person name="Halpern A.L."/>
            <person name="Mobarry C.M."/>
            <person name="Lippert R."/>
            <person name="Walenz B."/>
            <person name="Shatkay H."/>
            <person name="Dew I."/>
            <person name="Miller J.R."/>
            <person name="Flanigan M.J."/>
            <person name="Edwards N.J."/>
            <person name="Bolanos R."/>
            <person name="Fasulo D."/>
            <person name="Halldorsson B.V."/>
            <person name="Hannenhalli S."/>
            <person name="Turner R."/>
            <person name="Yooseph S."/>
            <person name="Lu F."/>
            <person name="Nusskern D.R."/>
            <person name="Shue B.C."/>
            <person name="Zheng X.H."/>
            <person name="Zhong F."/>
            <person name="Delcher A.L."/>
            <person name="Huson D.H."/>
            <person name="Kravitz S.A."/>
            <person name="Mouchard L."/>
            <person name="Reinert K."/>
            <person name="Remington K.A."/>
            <person name="Clark A.G."/>
            <person name="Waterman M.S."/>
            <person name="Eichler E.E."/>
            <person name="Adams M.D."/>
            <person name="Hunkapiller M.W."/>
            <person name="Myers E.W."/>
            <person name="Venter J.C."/>
        </authorList>
    </citation>
    <scope>NUCLEOTIDE SEQUENCE [LARGE SCALE GENOMIC DNA]</scope>
</reference>
<reference key="5">
    <citation type="journal article" date="2004" name="Genome Res.">
        <title>The status, quality, and expansion of the NIH full-length cDNA project: the Mammalian Gene Collection (MGC).</title>
        <authorList>
            <consortium name="The MGC Project Team"/>
        </authorList>
    </citation>
    <scope>NUCLEOTIDE SEQUENCE [LARGE SCALE MRNA] (ISOFORM 2)</scope>
    <scope>NUCLEOTIDE SEQUENCE [LARGE SCALE MRNA] OF 1-354 (ISOFORM 1)</scope>
    <source>
        <tissue>Placenta</tissue>
        <tissue>Uterus</tissue>
    </source>
</reference>
<reference key="6">
    <citation type="journal article" date="2004" name="Nat. Genet.">
        <title>Complete sequencing and characterization of 21,243 full-length human cDNAs.</title>
        <authorList>
            <person name="Ota T."/>
            <person name="Suzuki Y."/>
            <person name="Nishikawa T."/>
            <person name="Otsuki T."/>
            <person name="Sugiyama T."/>
            <person name="Irie R."/>
            <person name="Wakamatsu A."/>
            <person name="Hayashi K."/>
            <person name="Sato H."/>
            <person name="Nagai K."/>
            <person name="Kimura K."/>
            <person name="Makita H."/>
            <person name="Sekine M."/>
            <person name="Obayashi M."/>
            <person name="Nishi T."/>
            <person name="Shibahara T."/>
            <person name="Tanaka T."/>
            <person name="Ishii S."/>
            <person name="Yamamoto J."/>
            <person name="Saito K."/>
            <person name="Kawai Y."/>
            <person name="Isono Y."/>
            <person name="Nakamura Y."/>
            <person name="Nagahari K."/>
            <person name="Murakami K."/>
            <person name="Yasuda T."/>
            <person name="Iwayanagi T."/>
            <person name="Wagatsuma M."/>
            <person name="Shiratori A."/>
            <person name="Sudo H."/>
            <person name="Hosoiri T."/>
            <person name="Kaku Y."/>
            <person name="Kodaira H."/>
            <person name="Kondo H."/>
            <person name="Sugawara M."/>
            <person name="Takahashi M."/>
            <person name="Kanda K."/>
            <person name="Yokoi T."/>
            <person name="Furuya T."/>
            <person name="Kikkawa E."/>
            <person name="Omura Y."/>
            <person name="Abe K."/>
            <person name="Kamihara K."/>
            <person name="Katsuta N."/>
            <person name="Sato K."/>
            <person name="Tanikawa M."/>
            <person name="Yamazaki M."/>
            <person name="Ninomiya K."/>
            <person name="Ishibashi T."/>
            <person name="Yamashita H."/>
            <person name="Murakawa K."/>
            <person name="Fujimori K."/>
            <person name="Tanai H."/>
            <person name="Kimata M."/>
            <person name="Watanabe M."/>
            <person name="Hiraoka S."/>
            <person name="Chiba Y."/>
            <person name="Ishida S."/>
            <person name="Ono Y."/>
            <person name="Takiguchi S."/>
            <person name="Watanabe S."/>
            <person name="Yosida M."/>
            <person name="Hotuta T."/>
            <person name="Kusano J."/>
            <person name="Kanehori K."/>
            <person name="Takahashi-Fujii A."/>
            <person name="Hara H."/>
            <person name="Tanase T.-O."/>
            <person name="Nomura Y."/>
            <person name="Togiya S."/>
            <person name="Komai F."/>
            <person name="Hara R."/>
            <person name="Takeuchi K."/>
            <person name="Arita M."/>
            <person name="Imose N."/>
            <person name="Musashino K."/>
            <person name="Yuuki H."/>
            <person name="Oshima A."/>
            <person name="Sasaki N."/>
            <person name="Aotsuka S."/>
            <person name="Yoshikawa Y."/>
            <person name="Matsunawa H."/>
            <person name="Ichihara T."/>
            <person name="Shiohata N."/>
            <person name="Sano S."/>
            <person name="Moriya S."/>
            <person name="Momiyama H."/>
            <person name="Satoh N."/>
            <person name="Takami S."/>
            <person name="Terashima Y."/>
            <person name="Suzuki O."/>
            <person name="Nakagawa S."/>
            <person name="Senoh A."/>
            <person name="Mizoguchi H."/>
            <person name="Goto Y."/>
            <person name="Shimizu F."/>
            <person name="Wakebe H."/>
            <person name="Hishigaki H."/>
            <person name="Watanabe T."/>
            <person name="Sugiyama A."/>
            <person name="Takemoto M."/>
            <person name="Kawakami B."/>
            <person name="Yamazaki M."/>
            <person name="Watanabe K."/>
            <person name="Kumagai A."/>
            <person name="Itakura S."/>
            <person name="Fukuzumi Y."/>
            <person name="Fujimori Y."/>
            <person name="Komiyama M."/>
            <person name="Tashiro H."/>
            <person name="Tanigami A."/>
            <person name="Fujiwara T."/>
            <person name="Ono T."/>
            <person name="Yamada K."/>
            <person name="Fujii Y."/>
            <person name="Ozaki K."/>
            <person name="Hirao M."/>
            <person name="Ohmori Y."/>
            <person name="Kawabata A."/>
            <person name="Hikiji T."/>
            <person name="Kobatake N."/>
            <person name="Inagaki H."/>
            <person name="Ikema Y."/>
            <person name="Okamoto S."/>
            <person name="Okitani R."/>
            <person name="Kawakami T."/>
            <person name="Noguchi S."/>
            <person name="Itoh T."/>
            <person name="Shigeta K."/>
            <person name="Senba T."/>
            <person name="Matsumura K."/>
            <person name="Nakajima Y."/>
            <person name="Mizuno T."/>
            <person name="Morinaga M."/>
            <person name="Sasaki M."/>
            <person name="Togashi T."/>
            <person name="Oyama M."/>
            <person name="Hata H."/>
            <person name="Watanabe M."/>
            <person name="Komatsu T."/>
            <person name="Mizushima-Sugano J."/>
            <person name="Satoh T."/>
            <person name="Shirai Y."/>
            <person name="Takahashi Y."/>
            <person name="Nakagawa K."/>
            <person name="Okumura K."/>
            <person name="Nagase T."/>
            <person name="Nomura N."/>
            <person name="Kikuchi H."/>
            <person name="Masuho Y."/>
            <person name="Yamashita R."/>
            <person name="Nakai K."/>
            <person name="Yada T."/>
            <person name="Nakamura Y."/>
            <person name="Ohara O."/>
            <person name="Isogai T."/>
            <person name="Sugano S."/>
        </authorList>
    </citation>
    <scope>NUCLEOTIDE SEQUENCE [LARGE SCALE MRNA] OF 486-811 (ISOFORM 1)</scope>
    <source>
        <tissue>Signet-ring cell carcinoma</tissue>
        <tissue>Teratocarcinoma</tissue>
    </source>
</reference>
<reference key="7">
    <citation type="journal article" date="2008" name="Proc. Natl. Acad. Sci. U.S.A.">
        <title>A quantitative atlas of mitotic phosphorylation.</title>
        <authorList>
            <person name="Dephoure N."/>
            <person name="Zhou C."/>
            <person name="Villen J."/>
            <person name="Beausoleil S.A."/>
            <person name="Bakalarski C.E."/>
            <person name="Elledge S.J."/>
            <person name="Gygi S.P."/>
        </authorList>
    </citation>
    <scope>PHOSPHORYLATION [LARGE SCALE ANALYSIS] AT SER-512</scope>
    <scope>IDENTIFICATION BY MASS SPECTROMETRY [LARGE SCALE ANALYSIS]</scope>
    <source>
        <tissue>Cervix carcinoma</tissue>
    </source>
</reference>
<reference key="8">
    <citation type="journal article" date="2010" name="Cancer Res.">
        <title>Cell-permeable peptide DEPDC1-ZNF224 interferes with transcriptional repression and oncogenicity in bladder cancer cells.</title>
        <authorList>
            <person name="Harada Y."/>
            <person name="Kanehira M."/>
            <person name="Fujisawa Y."/>
            <person name="Takata R."/>
            <person name="Shuin T."/>
            <person name="Miki T."/>
            <person name="Fujioka T."/>
            <person name="Nakamura Y."/>
            <person name="Katagiri T."/>
        </authorList>
    </citation>
    <scope>FUNCTION</scope>
    <scope>SUBCELLULAR LOCATION</scope>
    <scope>INTERACTION WITH ZNF224</scope>
</reference>
<reference key="9">
    <citation type="journal article" date="2013" name="J. Proteome Res.">
        <title>Toward a comprehensive characterization of a human cancer cell phosphoproteome.</title>
        <authorList>
            <person name="Zhou H."/>
            <person name="Di Palma S."/>
            <person name="Preisinger C."/>
            <person name="Peng M."/>
            <person name="Polat A.N."/>
            <person name="Heck A.J."/>
            <person name="Mohammed S."/>
        </authorList>
    </citation>
    <scope>PHOSPHORYLATION [LARGE SCALE ANALYSIS] AT SER-512</scope>
    <scope>IDENTIFICATION BY MASS SPECTROMETRY [LARGE SCALE ANALYSIS]</scope>
    <source>
        <tissue>Erythroleukemia</tissue>
    </source>
</reference>
<reference key="10">
    <citation type="submission" date="2009-02" db="PDB data bank">
        <title>Solution structure of the dep domain from human dep domain-containing protein 1.</title>
        <authorList>
            <consortium name="RIKEN structural genomics initiative (RSGI)"/>
        </authorList>
    </citation>
    <scope>STRUCTURE BY NMR OF 11-108</scope>
</reference>
<comment type="function">
    <text evidence="3">May be involved in transcriptional regulation as a transcriptional corepressor. The DEPDC1A-ZNF224 complex may play a critical role in bladder carcinogenesis by repressing the transcription of the A20 gene, leading to transport of NF-KB protein into the nucleus, resulting in suppression of apoptosis of bladder cancer cells.</text>
</comment>
<comment type="subunit">
    <text evidence="2 3">Isoform 2 and isoform 5 can form homodimers and heterodimers. Interacts with ZNF224.</text>
</comment>
<comment type="subcellular location">
    <subcellularLocation>
        <location evidence="2 3">Nucleus</location>
    </subcellularLocation>
    <text>Colocalizes with ZNF224 at the nucleus.</text>
</comment>
<comment type="alternative products">
    <event type="alternative splicing"/>
    <isoform>
        <id>Q5TB30-5</id>
        <name>1</name>
        <name>DEPDC1-V1</name>
        <sequence type="displayed"/>
    </isoform>
    <isoform>
        <id>Q5TB30-2</id>
        <name>2</name>
        <name>DEPDC1-V2</name>
        <sequence type="described" ref="VSP_024652 VSP_024653"/>
    </isoform>
</comment>
<comment type="tissue specificity">
    <text evidence="2">Expressed in testis. Up-regulated in bladder cancer cells (at protein level).</text>
</comment>
<comment type="sequence caution" evidence="7">
    <conflict type="miscellaneous discrepancy">
        <sequence resource="EMBL-CDS" id="AAH03511"/>
    </conflict>
    <text>Contaminating sequence. Potential poly-A sequence.</text>
</comment>
<comment type="sequence caution" evidence="7">
    <conflict type="erroneous initiation">
        <sequence resource="EMBL-CDS" id="BAA91201"/>
    </conflict>
    <text>Truncated N-terminus.</text>
</comment>
<comment type="sequence caution" evidence="7">
    <conflict type="erroneous initiation">
        <sequence resource="EMBL-CDS" id="BAB14246"/>
    </conflict>
    <text>Truncated N-terminus.</text>
</comment>
<comment type="sequence caution" evidence="7">
    <conflict type="miscellaneous discrepancy">
        <sequence resource="EMBL-CDS" id="BAB14246"/>
    </conflict>
    <text>Probable cloning artifact.</text>
</comment>
<evidence type="ECO:0000255" key="1">
    <source>
        <dbReference type="PROSITE-ProRule" id="PRU00066"/>
    </source>
</evidence>
<evidence type="ECO:0000269" key="2">
    <source>
    </source>
</evidence>
<evidence type="ECO:0000269" key="3">
    <source>
    </source>
</evidence>
<evidence type="ECO:0000303" key="4">
    <source>
    </source>
</evidence>
<evidence type="ECO:0000303" key="5">
    <source>
    </source>
</evidence>
<evidence type="ECO:0000303" key="6">
    <source ref="1"/>
</evidence>
<evidence type="ECO:0000305" key="7"/>
<evidence type="ECO:0007744" key="8">
    <source>
    </source>
</evidence>
<evidence type="ECO:0007744" key="9">
    <source>
    </source>
</evidence>
<evidence type="ECO:0007829" key="10">
    <source>
        <dbReference type="PDB" id="2YSR"/>
    </source>
</evidence>
<gene>
    <name type="primary">DEPDC1</name>
    <name type="synonym">DEPDC1A</name>
</gene>
<proteinExistence type="evidence at protein level"/>
<feature type="chain" id="PRO_0000284786" description="DEP domain-containing protein 1A">
    <location>
        <begin position="1"/>
        <end position="811"/>
    </location>
</feature>
<feature type="domain" description="DEP" evidence="1">
    <location>
        <begin position="24"/>
        <end position="108"/>
    </location>
</feature>
<feature type="domain" description="Rho-GAP">
    <location>
        <begin position="281"/>
        <end position="321"/>
    </location>
</feature>
<feature type="region of interest" description="Interaction with ZNF224" evidence="3">
    <location>
        <begin position="598"/>
        <end position="653"/>
    </location>
</feature>
<feature type="modified residue" description="Phosphoserine" evidence="8 9">
    <location>
        <position position="512"/>
    </location>
</feature>
<feature type="splice variant" id="VSP_024652" description="In isoform 2." evidence="4 5 6">
    <original>V</original>
    <variation>G</variation>
    <location>
        <position position="304"/>
    </location>
</feature>
<feature type="splice variant" id="VSP_024653" description="In isoform 2." evidence="4 5 6">
    <location>
        <begin position="305"/>
        <end position="588"/>
    </location>
</feature>
<feature type="sequence variant" id="VAR_059798" description="In dbSNP:rs3790479.">
    <original>I</original>
    <variation>R</variation>
    <location>
        <position position="404"/>
    </location>
</feature>
<feature type="sequence conflict" description="In Ref. 6; BAA91201." evidence="7" ref="6">
    <original>S</original>
    <variation>P</variation>
    <location>
        <position position="720"/>
    </location>
</feature>
<feature type="helix" evidence="10">
    <location>
        <begin position="11"/>
        <end position="26"/>
    </location>
</feature>
<feature type="strand" evidence="10">
    <location>
        <begin position="36"/>
        <end position="39"/>
    </location>
</feature>
<feature type="helix" evidence="10">
    <location>
        <begin position="46"/>
        <end position="59"/>
    </location>
</feature>
<feature type="strand" evidence="10">
    <location>
        <begin position="60"/>
        <end position="63"/>
    </location>
</feature>
<feature type="turn" evidence="10">
    <location>
        <begin position="64"/>
        <end position="66"/>
    </location>
</feature>
<feature type="helix" evidence="10">
    <location>
        <begin position="69"/>
        <end position="81"/>
    </location>
</feature>
<feature type="strand" evidence="10">
    <location>
        <begin position="84"/>
        <end position="89"/>
    </location>
</feature>
<feature type="strand" evidence="10">
    <location>
        <begin position="99"/>
        <end position="101"/>
    </location>
</feature>
<feature type="strand" evidence="10">
    <location>
        <begin position="103"/>
        <end position="105"/>
    </location>
</feature>
<protein>
    <recommendedName>
        <fullName>DEP domain-containing protein 1A</fullName>
    </recommendedName>
</protein>
<keyword id="KW-0002">3D-structure</keyword>
<keyword id="KW-0025">Alternative splicing</keyword>
<keyword id="KW-0343">GTPase activation</keyword>
<keyword id="KW-0539">Nucleus</keyword>
<keyword id="KW-0597">Phosphoprotein</keyword>
<keyword id="KW-1267">Proteomics identification</keyword>
<keyword id="KW-1185">Reference proteome</keyword>
<keyword id="KW-0678">Repressor</keyword>
<keyword id="KW-0804">Transcription</keyword>
<keyword id="KW-0805">Transcription regulation</keyword>